<comment type="function">
    <text evidence="1">Secreted metalloproteinase that allows assimilation of proteinaceous substrates. Shows high activities on basic nuclear substrates such as histone and protamine. May be involved in virulence (By similarity).</text>
</comment>
<comment type="catalytic activity">
    <reaction>
        <text>Preferential cleavage of bonds with hydrophobic residues in P1'. Also 3-Asn-|-Gln-4 and 8-Gly-|-Ser-9 bonds in insulin B chain.</text>
        <dbReference type="EC" id="3.4.24.39"/>
    </reaction>
</comment>
<comment type="cofactor">
    <cofactor evidence="1">
        <name>Zn(2+)</name>
        <dbReference type="ChEBI" id="CHEBI:29105"/>
    </cofactor>
    <text evidence="1">Binds 1 zinc ion per subunit.</text>
</comment>
<comment type="subcellular location">
    <subcellularLocation>
        <location evidence="1">Secreted</location>
    </subcellularLocation>
</comment>
<comment type="similarity">
    <text evidence="3">Belongs to the peptidase M35 family.</text>
</comment>
<gene>
    <name type="primary">MEP2</name>
    <name type="ORF">CPC735_001400</name>
</gene>
<sequence>MLFPSIVAALAALANPVLSLTIPQATGSELDVQLSAIGNTRIKAVITNKADRQLKLLKYNNFFDDGPIQKAGVFKDGQPVKFEGMLRRVLMKNLEPSLFVSLSPGQTVEREFDIASTADLASGGAYSVFSQGAIPFAEGDGTTIAGAVAFKSNKLDLDIDGALAATVSKAINPISARTRVESACRGEQRETLLKALEYSAQLSRAAAQAAQNNTRKVEEYFMKSDAQTVETIVARLNAVAQESSSTDSGATRYFCNDRGNQCTPNTIAYTLPSLNVVVNCPIYYDLPVISDECHAQDQATTCLHEFTHNPGVYDPYCRDHAYGYDGIRKLSPEQALLNADTYSLFANGKPKSQTTSNFNLKF</sequence>
<evidence type="ECO:0000250" key="1"/>
<evidence type="ECO:0000255" key="2"/>
<evidence type="ECO:0000305" key="3"/>
<proteinExistence type="inferred from homology"/>
<dbReference type="EC" id="3.4.24.39"/>
<dbReference type="EMBL" id="AY987806">
    <property type="protein sequence ID" value="AAY45752.1"/>
    <property type="molecule type" value="Genomic_DNA"/>
</dbReference>
<dbReference type="EMBL" id="ACFW01000044">
    <property type="protein sequence ID" value="EER24795.1"/>
    <property type="molecule type" value="Genomic_DNA"/>
</dbReference>
<dbReference type="RefSeq" id="XP_003066940.1">
    <property type="nucleotide sequence ID" value="XM_003066894.1"/>
</dbReference>
<dbReference type="SMR" id="C5PE62"/>
<dbReference type="GeneID" id="9692333"/>
<dbReference type="KEGG" id="cpw:9692333"/>
<dbReference type="VEuPathDB" id="FungiDB:CPC735_001400"/>
<dbReference type="HOGENOM" id="CLU_039313_1_0_1"/>
<dbReference type="OrthoDB" id="412874at2759"/>
<dbReference type="BRENDA" id="3.4.24.39">
    <property type="organism ID" value="9184"/>
</dbReference>
<dbReference type="Proteomes" id="UP000009084">
    <property type="component" value="Unassembled WGS sequence"/>
</dbReference>
<dbReference type="GO" id="GO:0005576">
    <property type="term" value="C:extracellular region"/>
    <property type="evidence" value="ECO:0007669"/>
    <property type="project" value="UniProtKB-SubCell"/>
</dbReference>
<dbReference type="GO" id="GO:0046872">
    <property type="term" value="F:metal ion binding"/>
    <property type="evidence" value="ECO:0007669"/>
    <property type="project" value="UniProtKB-KW"/>
</dbReference>
<dbReference type="GO" id="GO:0004222">
    <property type="term" value="F:metalloendopeptidase activity"/>
    <property type="evidence" value="ECO:0007669"/>
    <property type="project" value="InterPro"/>
</dbReference>
<dbReference type="GO" id="GO:0006508">
    <property type="term" value="P:proteolysis"/>
    <property type="evidence" value="ECO:0007669"/>
    <property type="project" value="UniProtKB-KW"/>
</dbReference>
<dbReference type="CDD" id="cd11008">
    <property type="entry name" value="M35_deuterolysin_like"/>
    <property type="match status" value="1"/>
</dbReference>
<dbReference type="Gene3D" id="2.60.40.2970">
    <property type="match status" value="1"/>
</dbReference>
<dbReference type="Gene3D" id="3.40.390.10">
    <property type="entry name" value="Collagenase (Catalytic Domain)"/>
    <property type="match status" value="1"/>
</dbReference>
<dbReference type="InterPro" id="IPR050414">
    <property type="entry name" value="Fungal_M35_metalloproteases"/>
</dbReference>
<dbReference type="InterPro" id="IPR024079">
    <property type="entry name" value="MetalloPept_cat_dom_sf"/>
</dbReference>
<dbReference type="InterPro" id="IPR001384">
    <property type="entry name" value="Peptidase_M35"/>
</dbReference>
<dbReference type="PANTHER" id="PTHR37016">
    <property type="match status" value="1"/>
</dbReference>
<dbReference type="PANTHER" id="PTHR37016:SF3">
    <property type="entry name" value="NEUTRAL PROTEASE 2-RELATED"/>
    <property type="match status" value="1"/>
</dbReference>
<dbReference type="Pfam" id="PF02102">
    <property type="entry name" value="Peptidase_M35"/>
    <property type="match status" value="1"/>
</dbReference>
<dbReference type="PRINTS" id="PR00768">
    <property type="entry name" value="DEUTEROLYSIN"/>
</dbReference>
<dbReference type="SUPFAM" id="SSF55486">
    <property type="entry name" value="Metalloproteases ('zincins'), catalytic domain"/>
    <property type="match status" value="1"/>
</dbReference>
<reference key="1">
    <citation type="journal article" date="2005" name="Infect. Immun.">
        <title>A metalloproteinase of Coccidioides posadasii contributes to evasion of host detection.</title>
        <authorList>
            <person name="Hung C.Y."/>
            <person name="Seshan K.R."/>
            <person name="Yu J.J."/>
            <person name="Schaller R."/>
            <person name="Xue J."/>
            <person name="Basrur V."/>
            <person name="Gardner M.J."/>
            <person name="Cole G.T."/>
        </authorList>
    </citation>
    <scope>NUCLEOTIDE SEQUENCE [GENOMIC DNA]</scope>
    <source>
        <strain>C735</strain>
    </source>
</reference>
<reference key="2">
    <citation type="journal article" date="2009" name="Genome Res.">
        <title>Comparative genomic analyses of the human fungal pathogens Coccidioides and their relatives.</title>
        <authorList>
            <person name="Sharpton T.J."/>
            <person name="Stajich J.E."/>
            <person name="Rounsley S.D."/>
            <person name="Gardner M.J."/>
            <person name="Wortman J.R."/>
            <person name="Jordar V.S."/>
            <person name="Maiti R."/>
            <person name="Kodira C.D."/>
            <person name="Neafsey D.E."/>
            <person name="Zeng Q."/>
            <person name="Hung C.-Y."/>
            <person name="McMahan C."/>
            <person name="Muszewska A."/>
            <person name="Grynberg M."/>
            <person name="Mandel M.A."/>
            <person name="Kellner E.M."/>
            <person name="Barker B.M."/>
            <person name="Galgiani J.N."/>
            <person name="Orbach M.J."/>
            <person name="Kirkland T.N."/>
            <person name="Cole G.T."/>
            <person name="Henn M.R."/>
            <person name="Birren B.W."/>
            <person name="Taylor J.W."/>
        </authorList>
    </citation>
    <scope>NUCLEOTIDE SEQUENCE [LARGE SCALE GENOMIC DNA]</scope>
    <source>
        <strain>C735</strain>
    </source>
</reference>
<protein>
    <recommendedName>
        <fullName>Neutral protease 2 homolog MEP2</fullName>
        <ecNumber>3.4.24.39</ecNumber>
    </recommendedName>
    <alternativeName>
        <fullName>Deuterolysin MEP2</fullName>
    </alternativeName>
    <alternativeName>
        <fullName>Metalloproteinase 2</fullName>
    </alternativeName>
</protein>
<keyword id="KW-0165">Cleavage on pair of basic residues</keyword>
<keyword id="KW-1015">Disulfide bond</keyword>
<keyword id="KW-0378">Hydrolase</keyword>
<keyword id="KW-0479">Metal-binding</keyword>
<keyword id="KW-0482">Metalloprotease</keyword>
<keyword id="KW-0645">Protease</keyword>
<keyword id="KW-0964">Secreted</keyword>
<keyword id="KW-0732">Signal</keyword>
<keyword id="KW-0843">Virulence</keyword>
<keyword id="KW-0862">Zinc</keyword>
<keyword id="KW-0865">Zymogen</keyword>
<organism>
    <name type="scientific">Coccidioides posadasii (strain C735)</name>
    <name type="common">Valley fever fungus</name>
    <dbReference type="NCBI Taxonomy" id="222929"/>
    <lineage>
        <taxon>Eukaryota</taxon>
        <taxon>Fungi</taxon>
        <taxon>Dikarya</taxon>
        <taxon>Ascomycota</taxon>
        <taxon>Pezizomycotina</taxon>
        <taxon>Eurotiomycetes</taxon>
        <taxon>Eurotiomycetidae</taxon>
        <taxon>Onygenales</taxon>
        <taxon>Onygenaceae</taxon>
        <taxon>Coccidioides</taxon>
    </lineage>
</organism>
<name>MEP2_COCP7</name>
<accession>C5PE62</accession>
<accession>Q3KRR1</accession>
<feature type="signal peptide" evidence="2">
    <location>
        <begin position="1"/>
        <end position="19"/>
    </location>
</feature>
<feature type="propeptide" id="PRO_0000407066" evidence="1">
    <location>
        <begin position="20"/>
        <end position="177"/>
    </location>
</feature>
<feature type="chain" id="PRO_0000407067" description="Neutral protease 2 homolog MEP2">
    <location>
        <begin position="178"/>
        <end position="362"/>
    </location>
</feature>
<feature type="active site" evidence="1">
    <location>
        <position position="305"/>
    </location>
</feature>
<feature type="binding site" evidence="1">
    <location>
        <position position="304"/>
    </location>
    <ligand>
        <name>Zn(2+)</name>
        <dbReference type="ChEBI" id="CHEBI:29105"/>
        <note>catalytic</note>
    </ligand>
</feature>
<feature type="binding site" evidence="1">
    <location>
        <position position="308"/>
    </location>
    <ligand>
        <name>Zn(2+)</name>
        <dbReference type="ChEBI" id="CHEBI:29105"/>
        <note>catalytic</note>
    </ligand>
</feature>
<feature type="binding site" evidence="1">
    <location>
        <position position="319"/>
    </location>
    <ligand>
        <name>Zn(2+)</name>
        <dbReference type="ChEBI" id="CHEBI:29105"/>
        <note>catalytic</note>
    </ligand>
</feature>
<feature type="disulfide bond" evidence="1">
    <location>
        <begin position="184"/>
        <end position="255"/>
    </location>
</feature>
<feature type="disulfide bond" evidence="1">
    <location>
        <begin position="262"/>
        <end position="280"/>
    </location>
</feature>